<gene>
    <name type="ordered locus">BAB1_0178</name>
</gene>
<evidence type="ECO:0000255" key="1">
    <source>
        <dbReference type="HAMAP-Rule" id="MF_00048"/>
    </source>
</evidence>
<dbReference type="EMBL" id="AM040264">
    <property type="protein sequence ID" value="CAJ10134.1"/>
    <property type="molecule type" value="Genomic_DNA"/>
</dbReference>
<dbReference type="RefSeq" id="WP_002965427.1">
    <property type="nucleotide sequence ID" value="NZ_KN046823.1"/>
</dbReference>
<dbReference type="SMR" id="Q2YP29"/>
<dbReference type="STRING" id="359391.BAB1_0178"/>
<dbReference type="KEGG" id="bmf:BAB1_0178"/>
<dbReference type="PATRIC" id="fig|359391.11.peg.1602"/>
<dbReference type="HOGENOM" id="CLU_115353_0_2_5"/>
<dbReference type="PhylomeDB" id="Q2YP29"/>
<dbReference type="Proteomes" id="UP000002719">
    <property type="component" value="Chromosome I"/>
</dbReference>
<dbReference type="GO" id="GO:0003676">
    <property type="term" value="F:nucleic acid binding"/>
    <property type="evidence" value="ECO:0007669"/>
    <property type="project" value="InterPro"/>
</dbReference>
<dbReference type="Gene3D" id="3.40.1350.10">
    <property type="match status" value="1"/>
</dbReference>
<dbReference type="HAMAP" id="MF_00048">
    <property type="entry name" value="UPF0102"/>
    <property type="match status" value="1"/>
</dbReference>
<dbReference type="InterPro" id="IPR011335">
    <property type="entry name" value="Restrct_endonuc-II-like"/>
</dbReference>
<dbReference type="InterPro" id="IPR011856">
    <property type="entry name" value="tRNA_endonuc-like_dom_sf"/>
</dbReference>
<dbReference type="InterPro" id="IPR003509">
    <property type="entry name" value="UPF0102_YraN-like"/>
</dbReference>
<dbReference type="NCBIfam" id="NF009151">
    <property type="entry name" value="PRK12497.1-5"/>
    <property type="match status" value="1"/>
</dbReference>
<dbReference type="PANTHER" id="PTHR34039">
    <property type="entry name" value="UPF0102 PROTEIN YRAN"/>
    <property type="match status" value="1"/>
</dbReference>
<dbReference type="PANTHER" id="PTHR34039:SF1">
    <property type="entry name" value="UPF0102 PROTEIN YRAN"/>
    <property type="match status" value="1"/>
</dbReference>
<dbReference type="Pfam" id="PF02021">
    <property type="entry name" value="UPF0102"/>
    <property type="match status" value="1"/>
</dbReference>
<dbReference type="SUPFAM" id="SSF52980">
    <property type="entry name" value="Restriction endonuclease-like"/>
    <property type="match status" value="1"/>
</dbReference>
<comment type="similarity">
    <text evidence="1">Belongs to the UPF0102 family.</text>
</comment>
<reference key="1">
    <citation type="journal article" date="2005" name="Infect. Immun.">
        <title>Whole-genome analyses of speciation events in pathogenic Brucellae.</title>
        <authorList>
            <person name="Chain P.S."/>
            <person name="Comerci D.J."/>
            <person name="Tolmasky M.E."/>
            <person name="Larimer F.W."/>
            <person name="Malfatti S.A."/>
            <person name="Vergez L.M."/>
            <person name="Aguero F."/>
            <person name="Land M.L."/>
            <person name="Ugalde R.A."/>
            <person name="Garcia E."/>
        </authorList>
    </citation>
    <scope>NUCLEOTIDE SEQUENCE [LARGE SCALE GENOMIC DNA]</scope>
    <source>
        <strain>2308</strain>
    </source>
</reference>
<name>Y178_BRUA2</name>
<protein>
    <recommendedName>
        <fullName evidence="1">UPF0102 protein BAB1_0178</fullName>
    </recommendedName>
</protein>
<organism>
    <name type="scientific">Brucella abortus (strain 2308)</name>
    <dbReference type="NCBI Taxonomy" id="359391"/>
    <lineage>
        <taxon>Bacteria</taxon>
        <taxon>Pseudomonadati</taxon>
        <taxon>Pseudomonadota</taxon>
        <taxon>Alphaproteobacteria</taxon>
        <taxon>Hyphomicrobiales</taxon>
        <taxon>Brucellaceae</taxon>
        <taxon>Brucella/Ochrobactrum group</taxon>
        <taxon>Brucella</taxon>
    </lineage>
</organism>
<feature type="chain" id="PRO_1000009192" description="UPF0102 protein BAB1_0178">
    <location>
        <begin position="1"/>
        <end position="126"/>
    </location>
</feature>
<keyword id="KW-1185">Reference proteome</keyword>
<accession>Q2YP29</accession>
<proteinExistence type="inferred from homology"/>
<sequence>MTDLREKKRIAFFRGHSAERLAAFALMLKGFRIVARRYRTRLGEIDLIARRGDLVLIVEVKARASFEAAQFAVTPQAMRRIEAAADLWLQRQTDRARLSLRFDMVAVLPRRWPKHVPAFFTAGHYG</sequence>